<feature type="chain" id="PRO_0000103193" description="4-hydroxy-tetrahydrodipicolinate synthase">
    <location>
        <begin position="1"/>
        <end position="289"/>
    </location>
</feature>
<feature type="active site" description="Proton donor/acceptor" evidence="1">
    <location>
        <position position="130"/>
    </location>
</feature>
<feature type="active site" description="Schiff-base intermediate with substrate" evidence="1">
    <location>
        <position position="158"/>
    </location>
</feature>
<feature type="binding site" evidence="1">
    <location>
        <position position="44"/>
    </location>
    <ligand>
        <name>pyruvate</name>
        <dbReference type="ChEBI" id="CHEBI:15361"/>
    </ligand>
</feature>
<feature type="binding site" evidence="1">
    <location>
        <position position="200"/>
    </location>
    <ligand>
        <name>pyruvate</name>
        <dbReference type="ChEBI" id="CHEBI:15361"/>
    </ligand>
</feature>
<feature type="site" description="Part of a proton relay during catalysis" evidence="1">
    <location>
        <position position="43"/>
    </location>
</feature>
<feature type="site" description="Part of a proton relay during catalysis" evidence="1">
    <location>
        <position position="104"/>
    </location>
</feature>
<sequence length="289" mass="31692">MFEGVIPAMVTPFKEDFSVDYEGIAKNLDYLEKHVNALVPAGTTGEAATLSYEEHIDVVRYVAETSKLPVIGGAGSNSTREAIWLAKEVEKAGAEAAMLVTPYYNKPNAEGLYQHYKAVASEVSIPIIVYNVPSRTGINTTPELVRRLAEIDNIFGIKEASGNLKQISEIIRTTPDDFVLLSGDDFLTLPILCLGGKGVISVAANVAPHLMKEMYEAFVEGNIERAREMHHRLTPLFDVLFIDTNPIPVKKALQLMGLAAGKPRLPLVELSEEKTQKVKEVLKSLELIS</sequence>
<keyword id="KW-0028">Amino-acid biosynthesis</keyword>
<keyword id="KW-0963">Cytoplasm</keyword>
<keyword id="KW-0220">Diaminopimelate biosynthesis</keyword>
<keyword id="KW-0456">Lyase</keyword>
<keyword id="KW-0457">Lysine biosynthesis</keyword>
<keyword id="KW-1185">Reference proteome</keyword>
<keyword id="KW-0704">Schiff base</keyword>
<gene>
    <name evidence="1" type="primary">dapA</name>
    <name type="ordered locus">AF_0910</name>
</gene>
<protein>
    <recommendedName>
        <fullName evidence="1">4-hydroxy-tetrahydrodipicolinate synthase</fullName>
        <shortName evidence="1">HTPA synthase</shortName>
        <ecNumber evidence="1">4.3.3.7</ecNumber>
    </recommendedName>
</protein>
<dbReference type="EC" id="4.3.3.7" evidence="1"/>
<dbReference type="EMBL" id="AE000782">
    <property type="protein sequence ID" value="AAB90330.1"/>
    <property type="molecule type" value="Genomic_DNA"/>
</dbReference>
<dbReference type="PIR" id="F69363">
    <property type="entry name" value="F69363"/>
</dbReference>
<dbReference type="RefSeq" id="WP_010878410.1">
    <property type="nucleotide sequence ID" value="NC_000917.1"/>
</dbReference>
<dbReference type="SMR" id="O29352"/>
<dbReference type="STRING" id="224325.AF_0910"/>
<dbReference type="PaxDb" id="224325-AF_0910"/>
<dbReference type="EnsemblBacteria" id="AAB90330">
    <property type="protein sequence ID" value="AAB90330"/>
    <property type="gene ID" value="AF_0910"/>
</dbReference>
<dbReference type="GeneID" id="24794508"/>
<dbReference type="KEGG" id="afu:AF_0910"/>
<dbReference type="eggNOG" id="arCOG04172">
    <property type="taxonomic scope" value="Archaea"/>
</dbReference>
<dbReference type="HOGENOM" id="CLU_049343_7_1_2"/>
<dbReference type="OrthoDB" id="33636at2157"/>
<dbReference type="PhylomeDB" id="O29352"/>
<dbReference type="UniPathway" id="UPA00034">
    <property type="reaction ID" value="UER00017"/>
</dbReference>
<dbReference type="Proteomes" id="UP000002199">
    <property type="component" value="Chromosome"/>
</dbReference>
<dbReference type="GO" id="GO:0005829">
    <property type="term" value="C:cytosol"/>
    <property type="evidence" value="ECO:0007669"/>
    <property type="project" value="TreeGrafter"/>
</dbReference>
<dbReference type="GO" id="GO:0008675">
    <property type="term" value="F:2-dehydro-3-deoxy-phosphogluconate aldolase activity"/>
    <property type="evidence" value="ECO:0007669"/>
    <property type="project" value="UniProtKB-ARBA"/>
</dbReference>
<dbReference type="GO" id="GO:0008840">
    <property type="term" value="F:4-hydroxy-tetrahydrodipicolinate synthase activity"/>
    <property type="evidence" value="ECO:0007669"/>
    <property type="project" value="UniProtKB-UniRule"/>
</dbReference>
<dbReference type="GO" id="GO:0019877">
    <property type="term" value="P:diaminopimelate biosynthetic process"/>
    <property type="evidence" value="ECO:0007669"/>
    <property type="project" value="UniProtKB-UniRule"/>
</dbReference>
<dbReference type="GO" id="GO:0009089">
    <property type="term" value="P:lysine biosynthetic process via diaminopimelate"/>
    <property type="evidence" value="ECO:0007669"/>
    <property type="project" value="UniProtKB-UniRule"/>
</dbReference>
<dbReference type="CDD" id="cd00950">
    <property type="entry name" value="DHDPS"/>
    <property type="match status" value="1"/>
</dbReference>
<dbReference type="Gene3D" id="3.20.20.70">
    <property type="entry name" value="Aldolase class I"/>
    <property type="match status" value="1"/>
</dbReference>
<dbReference type="HAMAP" id="MF_00418">
    <property type="entry name" value="DapA"/>
    <property type="match status" value="1"/>
</dbReference>
<dbReference type="InterPro" id="IPR013785">
    <property type="entry name" value="Aldolase_TIM"/>
</dbReference>
<dbReference type="InterPro" id="IPR005263">
    <property type="entry name" value="DapA"/>
</dbReference>
<dbReference type="InterPro" id="IPR002220">
    <property type="entry name" value="DapA-like"/>
</dbReference>
<dbReference type="InterPro" id="IPR020625">
    <property type="entry name" value="Schiff_base-form_aldolases_AS"/>
</dbReference>
<dbReference type="InterPro" id="IPR020624">
    <property type="entry name" value="Schiff_base-form_aldolases_CS"/>
</dbReference>
<dbReference type="NCBIfam" id="TIGR00674">
    <property type="entry name" value="dapA"/>
    <property type="match status" value="1"/>
</dbReference>
<dbReference type="PANTHER" id="PTHR12128:SF66">
    <property type="entry name" value="4-HYDROXY-2-OXOGLUTARATE ALDOLASE, MITOCHONDRIAL"/>
    <property type="match status" value="1"/>
</dbReference>
<dbReference type="PANTHER" id="PTHR12128">
    <property type="entry name" value="DIHYDRODIPICOLINATE SYNTHASE"/>
    <property type="match status" value="1"/>
</dbReference>
<dbReference type="Pfam" id="PF00701">
    <property type="entry name" value="DHDPS"/>
    <property type="match status" value="1"/>
</dbReference>
<dbReference type="PIRSF" id="PIRSF001365">
    <property type="entry name" value="DHDPS"/>
    <property type="match status" value="1"/>
</dbReference>
<dbReference type="PRINTS" id="PR00146">
    <property type="entry name" value="DHPICSNTHASE"/>
</dbReference>
<dbReference type="SMART" id="SM01130">
    <property type="entry name" value="DHDPS"/>
    <property type="match status" value="1"/>
</dbReference>
<dbReference type="SUPFAM" id="SSF51569">
    <property type="entry name" value="Aldolase"/>
    <property type="match status" value="1"/>
</dbReference>
<dbReference type="PROSITE" id="PS00665">
    <property type="entry name" value="DHDPS_1"/>
    <property type="match status" value="1"/>
</dbReference>
<dbReference type="PROSITE" id="PS00666">
    <property type="entry name" value="DHDPS_2"/>
    <property type="match status" value="1"/>
</dbReference>
<evidence type="ECO:0000255" key="1">
    <source>
        <dbReference type="HAMAP-Rule" id="MF_00418"/>
    </source>
</evidence>
<evidence type="ECO:0000305" key="2"/>
<name>DAPA_ARCFU</name>
<proteinExistence type="inferred from homology"/>
<organism>
    <name type="scientific">Archaeoglobus fulgidus (strain ATCC 49558 / DSM 4304 / JCM 9628 / NBRC 100126 / VC-16)</name>
    <dbReference type="NCBI Taxonomy" id="224325"/>
    <lineage>
        <taxon>Archaea</taxon>
        <taxon>Methanobacteriati</taxon>
        <taxon>Methanobacteriota</taxon>
        <taxon>Archaeoglobi</taxon>
        <taxon>Archaeoglobales</taxon>
        <taxon>Archaeoglobaceae</taxon>
        <taxon>Archaeoglobus</taxon>
    </lineage>
</organism>
<accession>O29352</accession>
<comment type="function">
    <text evidence="1">Catalyzes the condensation of (S)-aspartate-beta-semialdehyde [(S)-ASA] and pyruvate to 4-hydroxy-tetrahydrodipicolinate (HTPA).</text>
</comment>
<comment type="catalytic activity">
    <reaction evidence="1">
        <text>L-aspartate 4-semialdehyde + pyruvate = (2S,4S)-4-hydroxy-2,3,4,5-tetrahydrodipicolinate + H2O + H(+)</text>
        <dbReference type="Rhea" id="RHEA:34171"/>
        <dbReference type="ChEBI" id="CHEBI:15361"/>
        <dbReference type="ChEBI" id="CHEBI:15377"/>
        <dbReference type="ChEBI" id="CHEBI:15378"/>
        <dbReference type="ChEBI" id="CHEBI:67139"/>
        <dbReference type="ChEBI" id="CHEBI:537519"/>
        <dbReference type="EC" id="4.3.3.7"/>
    </reaction>
</comment>
<comment type="pathway">
    <text evidence="1">Amino-acid biosynthesis; L-lysine biosynthesis via DAP pathway; (S)-tetrahydrodipicolinate from L-aspartate: step 3/4.</text>
</comment>
<comment type="subunit">
    <text evidence="1">Homotetramer; dimer of dimers.</text>
</comment>
<comment type="subcellular location">
    <subcellularLocation>
        <location evidence="1">Cytoplasm</location>
    </subcellularLocation>
</comment>
<comment type="similarity">
    <text evidence="1">Belongs to the DapA family.</text>
</comment>
<comment type="caution">
    <text evidence="2">Was originally thought to be a dihydrodipicolinate synthase (DHDPS), catalyzing the condensation of (S)-aspartate-beta-semialdehyde [(S)-ASA] and pyruvate to dihydrodipicolinate (DHDP). However, it was shown in E.coli that the product of the enzymatic reaction is not dihydrodipicolinate but in fact (4S)-4-hydroxy-2,3,4,5-tetrahydro-(2S)-dipicolinic acid (HTPA), and that the consecutive dehydration reaction leading to DHDP is not spontaneous but catalyzed by DapB.</text>
</comment>
<reference key="1">
    <citation type="journal article" date="1997" name="Nature">
        <title>The complete genome sequence of the hyperthermophilic, sulphate-reducing archaeon Archaeoglobus fulgidus.</title>
        <authorList>
            <person name="Klenk H.-P."/>
            <person name="Clayton R.A."/>
            <person name="Tomb J.-F."/>
            <person name="White O."/>
            <person name="Nelson K.E."/>
            <person name="Ketchum K.A."/>
            <person name="Dodson R.J."/>
            <person name="Gwinn M.L."/>
            <person name="Hickey E.K."/>
            <person name="Peterson J.D."/>
            <person name="Richardson D.L."/>
            <person name="Kerlavage A.R."/>
            <person name="Graham D.E."/>
            <person name="Kyrpides N.C."/>
            <person name="Fleischmann R.D."/>
            <person name="Quackenbush J."/>
            <person name="Lee N.H."/>
            <person name="Sutton G.G."/>
            <person name="Gill S.R."/>
            <person name="Kirkness E.F."/>
            <person name="Dougherty B.A."/>
            <person name="McKenney K."/>
            <person name="Adams M.D."/>
            <person name="Loftus B.J."/>
            <person name="Peterson S.N."/>
            <person name="Reich C.I."/>
            <person name="McNeil L.K."/>
            <person name="Badger J.H."/>
            <person name="Glodek A."/>
            <person name="Zhou L."/>
            <person name="Overbeek R."/>
            <person name="Gocayne J.D."/>
            <person name="Weidman J.F."/>
            <person name="McDonald L.A."/>
            <person name="Utterback T.R."/>
            <person name="Cotton M.D."/>
            <person name="Spriggs T."/>
            <person name="Artiach P."/>
            <person name="Kaine B.P."/>
            <person name="Sykes S.M."/>
            <person name="Sadow P.W."/>
            <person name="D'Andrea K.P."/>
            <person name="Bowman C."/>
            <person name="Fujii C."/>
            <person name="Garland S.A."/>
            <person name="Mason T.M."/>
            <person name="Olsen G.J."/>
            <person name="Fraser C.M."/>
            <person name="Smith H.O."/>
            <person name="Woese C.R."/>
            <person name="Venter J.C."/>
        </authorList>
    </citation>
    <scope>NUCLEOTIDE SEQUENCE [LARGE SCALE GENOMIC DNA]</scope>
    <source>
        <strain>ATCC 49558 / DSM 4304 / JCM 9628 / NBRC 100126 / VC-16</strain>
    </source>
</reference>